<evidence type="ECO:0000255" key="1"/>
<evidence type="ECO:0000256" key="2">
    <source>
        <dbReference type="SAM" id="MobiDB-lite"/>
    </source>
</evidence>
<evidence type="ECO:0000305" key="3"/>
<name>AIM39_ZYGRC</name>
<comment type="subcellular location">
    <subcellularLocation>
        <location evidence="3">Mitochondrion membrane</location>
        <topology evidence="3">Single-pass membrane protein</topology>
    </subcellularLocation>
</comment>
<comment type="similarity">
    <text evidence="3">Belongs to the AIM39 family.</text>
</comment>
<protein>
    <recommendedName>
        <fullName>Altered inheritance of mitochondria protein 39, mitochondrial</fullName>
    </recommendedName>
</protein>
<reference key="1">
    <citation type="journal article" date="2009" name="Genome Res.">
        <title>Comparative genomics of protoploid Saccharomycetaceae.</title>
        <authorList>
            <consortium name="The Genolevures Consortium"/>
            <person name="Souciet J.-L."/>
            <person name="Dujon B."/>
            <person name="Gaillardin C."/>
            <person name="Johnston M."/>
            <person name="Baret P.V."/>
            <person name="Cliften P."/>
            <person name="Sherman D.J."/>
            <person name="Weissenbach J."/>
            <person name="Westhof E."/>
            <person name="Wincker P."/>
            <person name="Jubin C."/>
            <person name="Poulain J."/>
            <person name="Barbe V."/>
            <person name="Segurens B."/>
            <person name="Artiguenave F."/>
            <person name="Anthouard V."/>
            <person name="Vacherie B."/>
            <person name="Val M.-E."/>
            <person name="Fulton R.S."/>
            <person name="Minx P."/>
            <person name="Wilson R."/>
            <person name="Durrens P."/>
            <person name="Jean G."/>
            <person name="Marck C."/>
            <person name="Martin T."/>
            <person name="Nikolski M."/>
            <person name="Rolland T."/>
            <person name="Seret M.-L."/>
            <person name="Casaregola S."/>
            <person name="Despons L."/>
            <person name="Fairhead C."/>
            <person name="Fischer G."/>
            <person name="Lafontaine I."/>
            <person name="Leh V."/>
            <person name="Lemaire M."/>
            <person name="de Montigny J."/>
            <person name="Neuveglise C."/>
            <person name="Thierry A."/>
            <person name="Blanc-Lenfle I."/>
            <person name="Bleykasten C."/>
            <person name="Diffels J."/>
            <person name="Fritsch E."/>
            <person name="Frangeul L."/>
            <person name="Goeffon A."/>
            <person name="Jauniaux N."/>
            <person name="Kachouri-Lafond R."/>
            <person name="Payen C."/>
            <person name="Potier S."/>
            <person name="Pribylova L."/>
            <person name="Ozanne C."/>
            <person name="Richard G.-F."/>
            <person name="Sacerdot C."/>
            <person name="Straub M.-L."/>
            <person name="Talla E."/>
        </authorList>
    </citation>
    <scope>NUCLEOTIDE SEQUENCE [LARGE SCALE GENOMIC DNA]</scope>
    <source>
        <strain>ATCC 2623 / CBS 732 / BCRC 21506 / NBRC 1130 / NCYC 568 / NRRL Y-229</strain>
    </source>
</reference>
<keyword id="KW-0472">Membrane</keyword>
<keyword id="KW-0496">Mitochondrion</keyword>
<keyword id="KW-1185">Reference proteome</keyword>
<keyword id="KW-0809">Transit peptide</keyword>
<keyword id="KW-0812">Transmembrane</keyword>
<keyword id="KW-1133">Transmembrane helix</keyword>
<sequence>MQNGYSVSIQHYTAKTTAMKTLKIWRPIFQRWLGKKGPVDPRYVFSRPPNNKGQDGTHFFTNPQDDNGGDNSGAEGIGEAIAKQRRQKRTRFAYNLFWVSIAGVLGYSIGYKVIYKKEQSFLPLMPASRVHKLNDRDARRIGIDKIRVLSRLKVLEQLSQHEMIKEQYGVPLLNVNTHETPNVDELTVWCEDSDPCVTGLVLEPDDGRPTIHNWYRLPYVFKWRLTHRPINIHKTINDISQNLGLTLSDVFQIITPEKVYGSFKYEYPLTSDDHYTKIWFLGEMKLGDDSLIIYKGKFHRDVTLEQIHLLRRENGKLIRYILYKNE</sequence>
<feature type="transit peptide" description="Mitochondrion" evidence="1">
    <location>
        <begin position="1"/>
        <end position="40"/>
    </location>
</feature>
<feature type="chain" id="PRO_0000399852" description="Altered inheritance of mitochondria protein 39, mitochondrial">
    <location>
        <begin position="41"/>
        <end position="326"/>
    </location>
</feature>
<feature type="transmembrane region" description="Helical" evidence="1">
    <location>
        <begin position="93"/>
        <end position="115"/>
    </location>
</feature>
<feature type="region of interest" description="Disordered" evidence="2">
    <location>
        <begin position="47"/>
        <end position="75"/>
    </location>
</feature>
<feature type="compositionally biased region" description="Polar residues" evidence="2">
    <location>
        <begin position="48"/>
        <end position="65"/>
    </location>
</feature>
<accession>C5E0J8</accession>
<dbReference type="EMBL" id="CU928179">
    <property type="protein sequence ID" value="CAR29632.1"/>
    <property type="molecule type" value="Genomic_DNA"/>
</dbReference>
<dbReference type="RefSeq" id="XP_002498565.1">
    <property type="nucleotide sequence ID" value="XM_002498520.1"/>
</dbReference>
<dbReference type="FunCoup" id="C5E0J8">
    <property type="interactions" value="40"/>
</dbReference>
<dbReference type="GeneID" id="8206382"/>
<dbReference type="KEGG" id="zro:ZYRO0G13332g"/>
<dbReference type="HOGENOM" id="CLU_058942_0_0_1"/>
<dbReference type="InParanoid" id="C5E0J8"/>
<dbReference type="Proteomes" id="UP000008536">
    <property type="component" value="Chromosome G"/>
</dbReference>
<dbReference type="GO" id="GO:0031966">
    <property type="term" value="C:mitochondrial membrane"/>
    <property type="evidence" value="ECO:0007669"/>
    <property type="project" value="UniProtKB-SubCell"/>
</dbReference>
<organism>
    <name type="scientific">Zygosaccharomyces rouxii (strain ATCC 2623 / CBS 732 / NBRC 1130 / NCYC 568 / NRRL Y-229)</name>
    <dbReference type="NCBI Taxonomy" id="559307"/>
    <lineage>
        <taxon>Eukaryota</taxon>
        <taxon>Fungi</taxon>
        <taxon>Dikarya</taxon>
        <taxon>Ascomycota</taxon>
        <taxon>Saccharomycotina</taxon>
        <taxon>Saccharomycetes</taxon>
        <taxon>Saccharomycetales</taxon>
        <taxon>Saccharomycetaceae</taxon>
        <taxon>Zygosaccharomyces</taxon>
    </lineage>
</organism>
<gene>
    <name type="primary">AIM39</name>
    <name type="ordered locus">ZYRO0G13332g</name>
</gene>
<proteinExistence type="inferred from homology"/>